<keyword id="KW-0997">Cell inner membrane</keyword>
<keyword id="KW-1003">Cell membrane</keyword>
<keyword id="KW-0963">Cytoplasm</keyword>
<keyword id="KW-0472">Membrane</keyword>
<name>HFLD_VIBA3</name>
<gene>
    <name evidence="1" type="primary">hflD</name>
    <name type="ordered locus">VS_2033</name>
</gene>
<organism>
    <name type="scientific">Vibrio atlanticus (strain LGP32)</name>
    <name type="common">Vibrio splendidus (strain Mel32)</name>
    <dbReference type="NCBI Taxonomy" id="575788"/>
    <lineage>
        <taxon>Bacteria</taxon>
        <taxon>Pseudomonadati</taxon>
        <taxon>Pseudomonadota</taxon>
        <taxon>Gammaproteobacteria</taxon>
        <taxon>Vibrionales</taxon>
        <taxon>Vibrionaceae</taxon>
        <taxon>Vibrio</taxon>
    </lineage>
</organism>
<protein>
    <recommendedName>
        <fullName evidence="1">High frequency lysogenization protein HflD homolog</fullName>
    </recommendedName>
</protein>
<proteinExistence type="inferred from homology"/>
<sequence length="205" mass="22509">MANTLYDRTIAFAGICQAVALVQQVAKDGHCDKDAFEASLSAILNTNPANTVGVFGREANLKLGLECLVKGIDSTPAGSDITRYIISLMALERKLSSRNDSMSQLGDRIQTAERQTEHFDLFDEQMISNLASIYLDVVSPIGPRIQVSGTPAVLQQTSSQHKVRALLLSGIRSAVLWRQVGGKRRHLIFGRKKMIEQAQILLARM</sequence>
<reference key="1">
    <citation type="submission" date="2009-02" db="EMBL/GenBank/DDBJ databases">
        <title>Vibrio splendidus str. LGP32 complete genome.</title>
        <authorList>
            <person name="Mazel D."/>
            <person name="Le Roux F."/>
        </authorList>
    </citation>
    <scope>NUCLEOTIDE SEQUENCE [LARGE SCALE GENOMIC DNA]</scope>
    <source>
        <strain>LGP32</strain>
    </source>
</reference>
<accession>B7VH09</accession>
<dbReference type="EMBL" id="FM954972">
    <property type="protein sequence ID" value="CAV19209.1"/>
    <property type="molecule type" value="Genomic_DNA"/>
</dbReference>
<dbReference type="SMR" id="B7VH09"/>
<dbReference type="STRING" id="575788.VS_2033"/>
<dbReference type="KEGG" id="vsp:VS_2033"/>
<dbReference type="eggNOG" id="COG2915">
    <property type="taxonomic scope" value="Bacteria"/>
</dbReference>
<dbReference type="HOGENOM" id="CLU_098920_0_0_6"/>
<dbReference type="Proteomes" id="UP000009100">
    <property type="component" value="Chromosome 1"/>
</dbReference>
<dbReference type="GO" id="GO:0005737">
    <property type="term" value="C:cytoplasm"/>
    <property type="evidence" value="ECO:0007669"/>
    <property type="project" value="UniProtKB-SubCell"/>
</dbReference>
<dbReference type="GO" id="GO:0005886">
    <property type="term" value="C:plasma membrane"/>
    <property type="evidence" value="ECO:0007669"/>
    <property type="project" value="UniProtKB-SubCell"/>
</dbReference>
<dbReference type="Gene3D" id="1.10.3890.10">
    <property type="entry name" value="HflD-like"/>
    <property type="match status" value="1"/>
</dbReference>
<dbReference type="HAMAP" id="MF_00695">
    <property type="entry name" value="HflD_protein"/>
    <property type="match status" value="1"/>
</dbReference>
<dbReference type="InterPro" id="IPR007451">
    <property type="entry name" value="HflD"/>
</dbReference>
<dbReference type="InterPro" id="IPR035932">
    <property type="entry name" value="HflD-like_sf"/>
</dbReference>
<dbReference type="NCBIfam" id="NF001246">
    <property type="entry name" value="PRK00218.1-2"/>
    <property type="match status" value="1"/>
</dbReference>
<dbReference type="NCBIfam" id="NF001248">
    <property type="entry name" value="PRK00218.1-4"/>
    <property type="match status" value="1"/>
</dbReference>
<dbReference type="PANTHER" id="PTHR38100">
    <property type="entry name" value="HIGH FREQUENCY LYSOGENIZATION PROTEIN HFLD"/>
    <property type="match status" value="1"/>
</dbReference>
<dbReference type="PANTHER" id="PTHR38100:SF1">
    <property type="entry name" value="HIGH FREQUENCY LYSOGENIZATION PROTEIN HFLD"/>
    <property type="match status" value="1"/>
</dbReference>
<dbReference type="Pfam" id="PF04356">
    <property type="entry name" value="DUF489"/>
    <property type="match status" value="1"/>
</dbReference>
<dbReference type="SUPFAM" id="SSF101322">
    <property type="entry name" value="YcfC-like"/>
    <property type="match status" value="1"/>
</dbReference>
<feature type="chain" id="PRO_1000200473" description="High frequency lysogenization protein HflD homolog">
    <location>
        <begin position="1"/>
        <end position="205"/>
    </location>
</feature>
<evidence type="ECO:0000255" key="1">
    <source>
        <dbReference type="HAMAP-Rule" id="MF_00695"/>
    </source>
</evidence>
<comment type="subcellular location">
    <subcellularLocation>
        <location>Cytoplasm</location>
    </subcellularLocation>
    <subcellularLocation>
        <location evidence="1">Cell inner membrane</location>
        <topology evidence="1">Peripheral membrane protein</topology>
        <orientation evidence="1">Cytoplasmic side</orientation>
    </subcellularLocation>
</comment>
<comment type="similarity">
    <text evidence="1">Belongs to the HflD family.</text>
</comment>